<accession>Q5YQZ4</accession>
<organism>
    <name type="scientific">Nocardia farcinica (strain IFM 10152)</name>
    <dbReference type="NCBI Taxonomy" id="247156"/>
    <lineage>
        <taxon>Bacteria</taxon>
        <taxon>Bacillati</taxon>
        <taxon>Actinomycetota</taxon>
        <taxon>Actinomycetes</taxon>
        <taxon>Mycobacteriales</taxon>
        <taxon>Nocardiaceae</taxon>
        <taxon>Nocardia</taxon>
    </lineage>
</organism>
<keyword id="KW-0028">Amino-acid biosynthesis</keyword>
<keyword id="KW-0378">Hydrolase</keyword>
<keyword id="KW-0460">Magnesium</keyword>
<keyword id="KW-0479">Metal-binding</keyword>
<keyword id="KW-0486">Methionine biosynthesis</keyword>
<keyword id="KW-1185">Reference proteome</keyword>
<name>MTNC_NOCFA</name>
<comment type="function">
    <text evidence="1">Bifunctional enzyme that catalyzes the enolization of 2,3-diketo-5-methylthiopentyl-1-phosphate (DK-MTP-1-P) into the intermediate 2-hydroxy-3-keto-5-methylthiopentenyl-1-phosphate (HK-MTPenyl-1-P), which is then dephosphorylated to form the acireductone 1,2-dihydroxy-3-keto-5-methylthiopentene (DHK-MTPene).</text>
</comment>
<comment type="catalytic activity">
    <reaction evidence="1">
        <text>5-methylsulfanyl-2,3-dioxopentyl phosphate + H2O = 1,2-dihydroxy-5-(methylsulfanyl)pent-1-en-3-one + phosphate</text>
        <dbReference type="Rhea" id="RHEA:21700"/>
        <dbReference type="ChEBI" id="CHEBI:15377"/>
        <dbReference type="ChEBI" id="CHEBI:43474"/>
        <dbReference type="ChEBI" id="CHEBI:49252"/>
        <dbReference type="ChEBI" id="CHEBI:58828"/>
        <dbReference type="EC" id="3.1.3.77"/>
    </reaction>
</comment>
<comment type="cofactor">
    <cofactor evidence="1">
        <name>Mg(2+)</name>
        <dbReference type="ChEBI" id="CHEBI:18420"/>
    </cofactor>
    <text evidence="1">Binds 1 Mg(2+) ion per subunit.</text>
</comment>
<comment type="pathway">
    <text evidence="1">Amino-acid biosynthesis; L-methionine biosynthesis via salvage pathway; L-methionine from S-methyl-5-thio-alpha-D-ribose 1-phosphate: step 3/6.</text>
</comment>
<comment type="pathway">
    <text evidence="1">Amino-acid biosynthesis; L-methionine biosynthesis via salvage pathway; L-methionine from S-methyl-5-thio-alpha-D-ribose 1-phosphate: step 4/6.</text>
</comment>
<comment type="subunit">
    <text evidence="1">Monomer.</text>
</comment>
<comment type="similarity">
    <text evidence="1">Belongs to the HAD-like hydrolase superfamily. MasA/MtnC family.</text>
</comment>
<reference key="1">
    <citation type="journal article" date="2004" name="Proc. Natl. Acad. Sci. U.S.A.">
        <title>The complete genomic sequence of Nocardia farcinica IFM 10152.</title>
        <authorList>
            <person name="Ishikawa J."/>
            <person name="Yamashita A."/>
            <person name="Mikami Y."/>
            <person name="Hoshino Y."/>
            <person name="Kurita H."/>
            <person name="Hotta K."/>
            <person name="Shiba T."/>
            <person name="Hattori M."/>
        </authorList>
    </citation>
    <scope>NUCLEOTIDE SEQUENCE [LARGE SCALE GENOMIC DNA]</scope>
    <source>
        <strain>IFM 10152</strain>
    </source>
</reference>
<protein>
    <recommendedName>
        <fullName evidence="1">Enolase-phosphatase E1</fullName>
        <ecNumber evidence="1">3.1.3.77</ecNumber>
    </recommendedName>
    <alternativeName>
        <fullName evidence="1">2,3-diketo-5-methylthio-1-phosphopentane phosphatase</fullName>
    </alternativeName>
</protein>
<dbReference type="EC" id="3.1.3.77" evidence="1"/>
<dbReference type="EMBL" id="AP006618">
    <property type="protein sequence ID" value="BAD59397.1"/>
    <property type="molecule type" value="Genomic_DNA"/>
</dbReference>
<dbReference type="RefSeq" id="WP_011211081.1">
    <property type="nucleotide sequence ID" value="NC_006361.1"/>
</dbReference>
<dbReference type="SMR" id="Q5YQZ4"/>
<dbReference type="STRING" id="247156.NFA_45460"/>
<dbReference type="GeneID" id="61135153"/>
<dbReference type="KEGG" id="nfa:NFA_45460"/>
<dbReference type="eggNOG" id="COG4229">
    <property type="taxonomic scope" value="Bacteria"/>
</dbReference>
<dbReference type="HOGENOM" id="CLU_023273_0_0_11"/>
<dbReference type="OrthoDB" id="9797416at2"/>
<dbReference type="UniPathway" id="UPA00904">
    <property type="reaction ID" value="UER00876"/>
</dbReference>
<dbReference type="UniPathway" id="UPA00904">
    <property type="reaction ID" value="UER00877"/>
</dbReference>
<dbReference type="Proteomes" id="UP000006820">
    <property type="component" value="Chromosome"/>
</dbReference>
<dbReference type="GO" id="GO:0043715">
    <property type="term" value="F:2,3-diketo-5-methylthiopentyl-1-phosphate enolase activity"/>
    <property type="evidence" value="ECO:0007669"/>
    <property type="project" value="UniProtKB-UniRule"/>
</dbReference>
<dbReference type="GO" id="GO:0043716">
    <property type="term" value="F:2-hydroxy-3-keto-5-methylthiopentenyl-1-phosphate phosphatase activity"/>
    <property type="evidence" value="ECO:0007669"/>
    <property type="project" value="UniProtKB-UniRule"/>
</dbReference>
<dbReference type="GO" id="GO:0043874">
    <property type="term" value="F:acireductone synthase activity"/>
    <property type="evidence" value="ECO:0007669"/>
    <property type="project" value="UniProtKB-EC"/>
</dbReference>
<dbReference type="GO" id="GO:0000287">
    <property type="term" value="F:magnesium ion binding"/>
    <property type="evidence" value="ECO:0007669"/>
    <property type="project" value="UniProtKB-UniRule"/>
</dbReference>
<dbReference type="GO" id="GO:0019509">
    <property type="term" value="P:L-methionine salvage from methylthioadenosine"/>
    <property type="evidence" value="ECO:0007669"/>
    <property type="project" value="UniProtKB-UniRule"/>
</dbReference>
<dbReference type="CDD" id="cd01629">
    <property type="entry name" value="HAD_EP"/>
    <property type="match status" value="1"/>
</dbReference>
<dbReference type="Gene3D" id="1.10.720.60">
    <property type="match status" value="1"/>
</dbReference>
<dbReference type="Gene3D" id="3.40.50.1000">
    <property type="entry name" value="HAD superfamily/HAD-like"/>
    <property type="match status" value="1"/>
</dbReference>
<dbReference type="HAMAP" id="MF_01681">
    <property type="entry name" value="Salvage_MtnC"/>
    <property type="match status" value="1"/>
</dbReference>
<dbReference type="InterPro" id="IPR023943">
    <property type="entry name" value="Enolase-ppase_E1"/>
</dbReference>
<dbReference type="InterPro" id="IPR036412">
    <property type="entry name" value="HAD-like_sf"/>
</dbReference>
<dbReference type="InterPro" id="IPR006439">
    <property type="entry name" value="HAD-SF_hydro_IA"/>
</dbReference>
<dbReference type="InterPro" id="IPR023214">
    <property type="entry name" value="HAD_sf"/>
</dbReference>
<dbReference type="NCBIfam" id="TIGR01691">
    <property type="entry name" value="enolase-ppase"/>
    <property type="match status" value="1"/>
</dbReference>
<dbReference type="PANTHER" id="PTHR20371">
    <property type="entry name" value="ENOLASE-PHOSPHATASE E1"/>
    <property type="match status" value="1"/>
</dbReference>
<dbReference type="PANTHER" id="PTHR20371:SF1">
    <property type="entry name" value="ENOLASE-PHOSPHATASE E1"/>
    <property type="match status" value="1"/>
</dbReference>
<dbReference type="Pfam" id="PF00702">
    <property type="entry name" value="Hydrolase"/>
    <property type="match status" value="1"/>
</dbReference>
<dbReference type="PRINTS" id="PR00413">
    <property type="entry name" value="HADHALOGNASE"/>
</dbReference>
<dbReference type="SFLD" id="SFLDG01133">
    <property type="entry name" value="C1.5.4:_Enolase-phosphatase_Li"/>
    <property type="match status" value="1"/>
</dbReference>
<dbReference type="SFLD" id="SFLDS00003">
    <property type="entry name" value="Haloacid_Dehalogenase"/>
    <property type="match status" value="1"/>
</dbReference>
<dbReference type="SUPFAM" id="SSF56784">
    <property type="entry name" value="HAD-like"/>
    <property type="match status" value="1"/>
</dbReference>
<evidence type="ECO:0000255" key="1">
    <source>
        <dbReference type="HAMAP-Rule" id="MF_01681"/>
    </source>
</evidence>
<sequence>MTTAIVLDIEGTTSPTGAVREDLYGYTRARLPEWLARHRDDAAAPILAATRELAGRPDADTDEVARILREWLGSDVKAEPLKEAQGLICHEGFATGALHGEFFPDVPPALRAWHAAGHRLCVYSSGSLRNQRDWFAHARGGELGSLISAHFDLTTAGPKREAGSYRRIAEALGVEAGQLLFLSDHADELDAAVAAGWSAVGVHRPGEPNPPRPPHRWIGSFDELDLARTPVS</sequence>
<proteinExistence type="inferred from homology"/>
<feature type="chain" id="PRO_0000357383" description="Enolase-phosphatase E1">
    <location>
        <begin position="1"/>
        <end position="232"/>
    </location>
</feature>
<gene>
    <name evidence="1" type="primary">mtnC</name>
    <name type="ordered locus">NFA_45460</name>
</gene>